<organism>
    <name type="scientific">Chromohalobacter salexigens (strain ATCC BAA-138 / DSM 3043 / CIP 106854 / NCIMB 13768 / 1H11)</name>
    <dbReference type="NCBI Taxonomy" id="290398"/>
    <lineage>
        <taxon>Bacteria</taxon>
        <taxon>Pseudomonadati</taxon>
        <taxon>Pseudomonadota</taxon>
        <taxon>Gammaproteobacteria</taxon>
        <taxon>Oceanospirillales</taxon>
        <taxon>Halomonadaceae</taxon>
        <taxon>Chromohalobacter</taxon>
    </lineage>
</organism>
<keyword id="KW-0004">4Fe-4S</keyword>
<keyword id="KW-0997">Cell inner membrane</keyword>
<keyword id="KW-1003">Cell membrane</keyword>
<keyword id="KW-0408">Iron</keyword>
<keyword id="KW-0411">Iron-sulfur</keyword>
<keyword id="KW-0472">Membrane</keyword>
<keyword id="KW-0479">Metal-binding</keyword>
<keyword id="KW-0560">Oxidoreductase</keyword>
<keyword id="KW-1185">Reference proteome</keyword>
<keyword id="KW-0677">Repeat</keyword>
<keyword id="KW-0812">Transmembrane</keyword>
<keyword id="KW-1133">Transmembrane helix</keyword>
<accession>Q1QYW0</accession>
<comment type="function">
    <text evidence="4">Participates in the electron transfer process during N,N-dimethylglycine (DMG) degradation to sarcosine (PubMed:32631860). Probably transfers the electrons from N,N-dimethylglycine/sarcosine dehydrogenase (DMGDH) to the electron transfer flavoprotein (ETF) EtfA-EtfB (PubMed:32631860).</text>
</comment>
<comment type="cofactor">
    <cofactor evidence="2">
        <name>[4Fe-4S] cluster</name>
        <dbReference type="ChEBI" id="CHEBI:49883"/>
    </cofactor>
    <text evidence="2">Binds 2 [4Fe-4S] cluster per subunit.</text>
</comment>
<comment type="subcellular location">
    <subcellularLocation>
        <location evidence="6">Cell inner membrane</location>
        <topology evidence="1">Multi-pass membrane protein</topology>
    </subcellularLocation>
</comment>
<comment type="disruption phenotype">
    <text evidence="4">Deletion mutant loses its ability to grow using DMG as the sole nitrogen source but is still capable of utilizing sarcosine and glycine as the sole nitrogen source.</text>
</comment>
<dbReference type="EC" id="1.-.-.-" evidence="7"/>
<dbReference type="EMBL" id="CP000285">
    <property type="protein sequence ID" value="ABE58348.1"/>
    <property type="molecule type" value="Genomic_DNA"/>
</dbReference>
<dbReference type="RefSeq" id="WP_011506294.1">
    <property type="nucleotide sequence ID" value="NC_007963.1"/>
</dbReference>
<dbReference type="STRING" id="290398.Csal_0991"/>
<dbReference type="GeneID" id="95333746"/>
<dbReference type="KEGG" id="csa:Csal_0991"/>
<dbReference type="eggNOG" id="COG0247">
    <property type="taxonomic scope" value="Bacteria"/>
</dbReference>
<dbReference type="HOGENOM" id="CLU_005304_1_1_6"/>
<dbReference type="OrthoDB" id="9794954at2"/>
<dbReference type="Proteomes" id="UP000000239">
    <property type="component" value="Chromosome"/>
</dbReference>
<dbReference type="GO" id="GO:0005886">
    <property type="term" value="C:plasma membrane"/>
    <property type="evidence" value="ECO:0007669"/>
    <property type="project" value="UniProtKB-SubCell"/>
</dbReference>
<dbReference type="GO" id="GO:0051539">
    <property type="term" value="F:4 iron, 4 sulfur cluster binding"/>
    <property type="evidence" value="ECO:0007669"/>
    <property type="project" value="UniProtKB-KW"/>
</dbReference>
<dbReference type="GO" id="GO:0046872">
    <property type="term" value="F:metal ion binding"/>
    <property type="evidence" value="ECO:0007669"/>
    <property type="project" value="UniProtKB-KW"/>
</dbReference>
<dbReference type="GO" id="GO:0016491">
    <property type="term" value="F:oxidoreductase activity"/>
    <property type="evidence" value="ECO:0007669"/>
    <property type="project" value="UniProtKB-KW"/>
</dbReference>
<dbReference type="FunFam" id="1.10.1060.10:FF:000014">
    <property type="entry name" value="DgcB, Dimethylglycine catabolism"/>
    <property type="match status" value="1"/>
</dbReference>
<dbReference type="Gene3D" id="1.10.1060.10">
    <property type="entry name" value="Alpha-helical ferredoxin"/>
    <property type="match status" value="1"/>
</dbReference>
<dbReference type="InterPro" id="IPR017896">
    <property type="entry name" value="4Fe4S_Fe-S-bd"/>
</dbReference>
<dbReference type="InterPro" id="IPR017900">
    <property type="entry name" value="4Fe4S_Fe_S_CS"/>
</dbReference>
<dbReference type="InterPro" id="IPR021872">
    <property type="entry name" value="Csal_0991-like_N"/>
</dbReference>
<dbReference type="InterPro" id="IPR004017">
    <property type="entry name" value="Cys_rich_dom"/>
</dbReference>
<dbReference type="InterPro" id="IPR051460">
    <property type="entry name" value="HdrC_iron-sulfur_subunit"/>
</dbReference>
<dbReference type="InterPro" id="IPR009051">
    <property type="entry name" value="Helical_ferredxn"/>
</dbReference>
<dbReference type="PANTHER" id="PTHR43255:SF1">
    <property type="entry name" value="IRON-SULFUR-BINDING OXIDOREDUCTASE FADF-RELATED"/>
    <property type="match status" value="1"/>
</dbReference>
<dbReference type="PANTHER" id="PTHR43255">
    <property type="entry name" value="IRON-SULFUR-BINDING OXIDOREDUCTASE FADF-RELATED-RELATED"/>
    <property type="match status" value="1"/>
</dbReference>
<dbReference type="Pfam" id="PF02754">
    <property type="entry name" value="CCG"/>
    <property type="match status" value="2"/>
</dbReference>
<dbReference type="Pfam" id="PF11982">
    <property type="entry name" value="DUF3483"/>
    <property type="match status" value="1"/>
</dbReference>
<dbReference type="Pfam" id="PF13187">
    <property type="entry name" value="Fer4_9"/>
    <property type="match status" value="1"/>
</dbReference>
<dbReference type="SUPFAM" id="SSF46548">
    <property type="entry name" value="alpha-helical ferredoxin"/>
    <property type="match status" value="1"/>
</dbReference>
<dbReference type="PROSITE" id="PS00198">
    <property type="entry name" value="4FE4S_FER_1"/>
    <property type="match status" value="2"/>
</dbReference>
<dbReference type="PROSITE" id="PS51379">
    <property type="entry name" value="4FE4S_FER_2"/>
    <property type="match status" value="2"/>
</dbReference>
<reference key="1">
    <citation type="journal article" date="2011" name="Stand. Genomic Sci.">
        <title>Complete genome sequence of the halophilic and highly halotolerant Chromohalobacter salexigens type strain (1H11(T)).</title>
        <authorList>
            <person name="Copeland A."/>
            <person name="O'Connor K."/>
            <person name="Lucas S."/>
            <person name="Lapidus A."/>
            <person name="Berry K.W."/>
            <person name="Detter J.C."/>
            <person name="Del Rio T.G."/>
            <person name="Hammon N."/>
            <person name="Dalin E."/>
            <person name="Tice H."/>
            <person name="Pitluck S."/>
            <person name="Bruce D."/>
            <person name="Goodwin L."/>
            <person name="Han C."/>
            <person name="Tapia R."/>
            <person name="Saunders E."/>
            <person name="Schmutz J."/>
            <person name="Brettin T."/>
            <person name="Larimer F."/>
            <person name="Land M."/>
            <person name="Hauser L."/>
            <person name="Vargas C."/>
            <person name="Nieto J.J."/>
            <person name="Kyrpides N.C."/>
            <person name="Ivanova N."/>
            <person name="Goker M."/>
            <person name="Klenk H.P."/>
            <person name="Csonka L.N."/>
            <person name="Woyke T."/>
        </authorList>
    </citation>
    <scope>NUCLEOTIDE SEQUENCE [LARGE SCALE GENOMIC DNA]</scope>
    <source>
        <strain>ATCC BAA-138 / DSM 3043 / CIP 106854 / NCIMB 13768 / 1H11</strain>
    </source>
</reference>
<reference key="2">
    <citation type="journal article" date="2020" name="Appl. Environ. Microbiol.">
        <title>Role of N,N-dimethylglycine and its catabolism to sarcosine in Chromohalobacter salexigens DSM 3043.</title>
        <authorList>
            <person name="Yang T."/>
            <person name="Shao Y.H."/>
            <person name="Guo L.Z."/>
            <person name="Meng X.L."/>
            <person name="Yu H."/>
            <person name="Lu W.D."/>
        </authorList>
    </citation>
    <scope>FUNCTION</scope>
    <scope>DISRUPTION PHENOTYPE</scope>
    <source>
        <strain>ATCC BAA-138 / DSM 3043 / CIP 106854 / NCIMB 13768 / 1H11</strain>
    </source>
</reference>
<sequence>MLDILLPILIFSALALAAIGAVRRIRLWRQGRPSPVPVLRGLAAVPRRYLVDLHHVVARDKVMSNTHVATAGGFVAAMGLAIVVHGLGLAEGVLGWLLLAASATMFAGSLFVARRRRNPPARLSKGPWMRLPKSLMAFSLGIFVVTLPAVGVLPADAGGWLVALVLAAVVAWGLAELVFGMTWGGPMKHAFAGALHLAFHRRPARFSDKRGGEGRSTGLKALDLDDADAPLGVEKPADFTWNQLLGFDACVQCGRCEAVCPAFAAGQPLNPKKLVQDMVVGMVGGSDARYAGSPYPGKPVGEHAGDPHGPIVAREGTALVDAETLWSCTTCRACVEECPMMIEHVDAIVDMRRHLTLEEGATPGKGAEVIDNLIATDNPGGFDPGGRLNWAADLDLPLMADVERAEVLLWLGDGVFDMRNQRTLRALIKVLRAADVDFAVLGNEERDSGDVARRLGDEATFQSLARRNIDTLSRYRFESIVTCDPHSFHVLKNEYGALYPQGQDADYPVWHHSTFINQLIESGRLPLAPGQAQRVTYHDPCYLGRYNGEYEAPRAVLRALGMELVEMQRSGYRSRCCGGGGGAPITDVPGKQRIPDMRMGDVRETQAEQVVVGCPQCTAMLEGVVPPAGNEATAVKDIAEMVAAALDNTPPATPASHDTAASQATEEVLS</sequence>
<gene>
    <name evidence="8" type="ordered locus">Csal_0991</name>
</gene>
<name>ETFFR_CHRSD</name>
<proteinExistence type="inferred from homology"/>
<protein>
    <recommendedName>
        <fullName evidence="5">Probable membrane-anchored ferredoxin csal_0991</fullName>
        <ecNumber evidence="7">1.-.-.-</ecNumber>
    </recommendedName>
    <alternativeName>
        <fullName evidence="5">Transmembrane clostridial-type ferredoxin</fullName>
    </alternativeName>
</protein>
<evidence type="ECO:0000255" key="1"/>
<evidence type="ECO:0000255" key="2">
    <source>
        <dbReference type="PROSITE-ProRule" id="PRU00711"/>
    </source>
</evidence>
<evidence type="ECO:0000256" key="3">
    <source>
        <dbReference type="SAM" id="MobiDB-lite"/>
    </source>
</evidence>
<evidence type="ECO:0000269" key="4">
    <source>
    </source>
</evidence>
<evidence type="ECO:0000303" key="5">
    <source>
    </source>
</evidence>
<evidence type="ECO:0000305" key="6"/>
<evidence type="ECO:0000305" key="7">
    <source>
    </source>
</evidence>
<evidence type="ECO:0000312" key="8">
    <source>
        <dbReference type="EMBL" id="ABE58348.1"/>
    </source>
</evidence>
<feature type="chain" id="PRO_0000459077" description="Probable membrane-anchored ferredoxin csal_0991">
    <location>
        <begin position="1"/>
        <end position="670"/>
    </location>
</feature>
<feature type="transmembrane region" description="Helical" evidence="1">
    <location>
        <begin position="2"/>
        <end position="22"/>
    </location>
</feature>
<feature type="transmembrane region" description="Helical" evidence="1">
    <location>
        <begin position="68"/>
        <end position="90"/>
    </location>
</feature>
<feature type="transmembrane region" description="Helical" evidence="1">
    <location>
        <begin position="94"/>
        <end position="113"/>
    </location>
</feature>
<feature type="transmembrane region" description="Helical" evidence="1">
    <location>
        <begin position="135"/>
        <end position="155"/>
    </location>
</feature>
<feature type="transmembrane region" description="Helical" evidence="1">
    <location>
        <begin position="159"/>
        <end position="179"/>
    </location>
</feature>
<feature type="domain" description="4Fe-4S ferredoxin-type 1" evidence="2">
    <location>
        <begin position="241"/>
        <end position="271"/>
    </location>
</feature>
<feature type="domain" description="4Fe-4S ferredoxin-type 2" evidence="2">
    <location>
        <begin position="316"/>
        <end position="347"/>
    </location>
</feature>
<feature type="region of interest" description="Disordered" evidence="3">
    <location>
        <begin position="648"/>
        <end position="670"/>
    </location>
</feature>
<feature type="compositionally biased region" description="Polar residues" evidence="3">
    <location>
        <begin position="659"/>
        <end position="670"/>
    </location>
</feature>
<feature type="binding site" evidence="2">
    <location>
        <position position="250"/>
    </location>
    <ligand>
        <name>[4Fe-4S] cluster</name>
        <dbReference type="ChEBI" id="CHEBI:49883"/>
        <label>1</label>
    </ligand>
</feature>
<feature type="binding site" evidence="2">
    <location>
        <position position="253"/>
    </location>
    <ligand>
        <name>[4Fe-4S] cluster</name>
        <dbReference type="ChEBI" id="CHEBI:49883"/>
        <label>1</label>
    </ligand>
</feature>
<feature type="binding site" evidence="2">
    <location>
        <position position="256"/>
    </location>
    <ligand>
        <name>[4Fe-4S] cluster</name>
        <dbReference type="ChEBI" id="CHEBI:49883"/>
        <label>1</label>
    </ligand>
</feature>
<feature type="binding site" evidence="2">
    <location>
        <position position="260"/>
    </location>
    <ligand>
        <name>[4Fe-4S] cluster</name>
        <dbReference type="ChEBI" id="CHEBI:49883"/>
        <label>2</label>
    </ligand>
</feature>
<feature type="binding site" evidence="2">
    <location>
        <position position="328"/>
    </location>
    <ligand>
        <name>[4Fe-4S] cluster</name>
        <dbReference type="ChEBI" id="CHEBI:49883"/>
        <label>2</label>
    </ligand>
</feature>
<feature type="binding site" evidence="2">
    <location>
        <position position="331"/>
    </location>
    <ligand>
        <name>[4Fe-4S] cluster</name>
        <dbReference type="ChEBI" id="CHEBI:49883"/>
        <label>2</label>
    </ligand>
</feature>
<feature type="binding site" evidence="2">
    <location>
        <position position="334"/>
    </location>
    <ligand>
        <name>[4Fe-4S] cluster</name>
        <dbReference type="ChEBI" id="CHEBI:49883"/>
        <label>2</label>
    </ligand>
</feature>
<feature type="binding site" evidence="2">
    <location>
        <position position="338"/>
    </location>
    <ligand>
        <name>[4Fe-4S] cluster</name>
        <dbReference type="ChEBI" id="CHEBI:49883"/>
        <label>1</label>
    </ligand>
</feature>